<gene>
    <name type="ordered locus">Lferr_2629</name>
</gene>
<accession>B5EQC6</accession>
<dbReference type="EMBL" id="CP001132">
    <property type="protein sequence ID" value="ACH84823.1"/>
    <property type="molecule type" value="Genomic_DNA"/>
</dbReference>
<dbReference type="SMR" id="B5EQC6"/>
<dbReference type="KEGG" id="afe:Lferr_2629"/>
<dbReference type="eggNOG" id="COG1660">
    <property type="taxonomic scope" value="Bacteria"/>
</dbReference>
<dbReference type="HOGENOM" id="CLU_059558_1_1_6"/>
<dbReference type="GO" id="GO:0005524">
    <property type="term" value="F:ATP binding"/>
    <property type="evidence" value="ECO:0007669"/>
    <property type="project" value="UniProtKB-UniRule"/>
</dbReference>
<dbReference type="GO" id="GO:0005525">
    <property type="term" value="F:GTP binding"/>
    <property type="evidence" value="ECO:0007669"/>
    <property type="project" value="UniProtKB-UniRule"/>
</dbReference>
<dbReference type="Gene3D" id="3.40.50.300">
    <property type="entry name" value="P-loop containing nucleotide triphosphate hydrolases"/>
    <property type="match status" value="1"/>
</dbReference>
<dbReference type="HAMAP" id="MF_00636">
    <property type="entry name" value="RapZ_like"/>
    <property type="match status" value="1"/>
</dbReference>
<dbReference type="InterPro" id="IPR027417">
    <property type="entry name" value="P-loop_NTPase"/>
</dbReference>
<dbReference type="InterPro" id="IPR005337">
    <property type="entry name" value="RapZ-like"/>
</dbReference>
<dbReference type="InterPro" id="IPR053930">
    <property type="entry name" value="RapZ-like_N"/>
</dbReference>
<dbReference type="InterPro" id="IPR053931">
    <property type="entry name" value="RapZ_C"/>
</dbReference>
<dbReference type="NCBIfam" id="NF003828">
    <property type="entry name" value="PRK05416.1"/>
    <property type="match status" value="1"/>
</dbReference>
<dbReference type="PANTHER" id="PTHR30448">
    <property type="entry name" value="RNASE ADAPTER PROTEIN RAPZ"/>
    <property type="match status" value="1"/>
</dbReference>
<dbReference type="PANTHER" id="PTHR30448:SF0">
    <property type="entry name" value="RNASE ADAPTER PROTEIN RAPZ"/>
    <property type="match status" value="1"/>
</dbReference>
<dbReference type="Pfam" id="PF22740">
    <property type="entry name" value="PapZ_C"/>
    <property type="match status" value="1"/>
</dbReference>
<dbReference type="Pfam" id="PF03668">
    <property type="entry name" value="RapZ-like_N"/>
    <property type="match status" value="1"/>
</dbReference>
<dbReference type="PIRSF" id="PIRSF005052">
    <property type="entry name" value="P-loopkin"/>
    <property type="match status" value="1"/>
</dbReference>
<dbReference type="SUPFAM" id="SSF52540">
    <property type="entry name" value="P-loop containing nucleoside triphosphate hydrolases"/>
    <property type="match status" value="1"/>
</dbReference>
<organism>
    <name type="scientific">Acidithiobacillus ferrooxidans (strain ATCC 53993 / BNL-5-31)</name>
    <name type="common">Leptospirillum ferrooxidans (ATCC 53993)</name>
    <dbReference type="NCBI Taxonomy" id="380394"/>
    <lineage>
        <taxon>Bacteria</taxon>
        <taxon>Pseudomonadati</taxon>
        <taxon>Pseudomonadota</taxon>
        <taxon>Acidithiobacillia</taxon>
        <taxon>Acidithiobacillales</taxon>
        <taxon>Acidithiobacillaceae</taxon>
        <taxon>Acidithiobacillus</taxon>
    </lineage>
</organism>
<evidence type="ECO:0000255" key="1">
    <source>
        <dbReference type="HAMAP-Rule" id="MF_00636"/>
    </source>
</evidence>
<comment type="function">
    <text evidence="1">Displays ATPase and GTPase activities.</text>
</comment>
<comment type="similarity">
    <text evidence="1">Belongs to the RapZ-like family.</text>
</comment>
<proteinExistence type="inferred from homology"/>
<name>Y2629_ACIF5</name>
<keyword id="KW-0067">ATP-binding</keyword>
<keyword id="KW-0342">GTP-binding</keyword>
<keyword id="KW-0547">Nucleotide-binding</keyword>
<protein>
    <recommendedName>
        <fullName evidence="1">Nucleotide-binding protein Lferr_2629</fullName>
    </recommendedName>
</protein>
<sequence length="299" mass="33557">MAERDFIIVSGLSGSGKSTVLQALEDQGYYCVDNLPATLLVDFGAQLARRDASSMLAAVSIDVRNREFLAALPQALADLRQRYALCPRILFLEADEGTLLRRFSETRRRHPLTDDLAAALGESLLTVLRREREMVQPLADVADKRLDTSQINTHQLRLRVQAWSLASRHYSGLVLLLQSFAFKKGLPLDSDFVFDLRALPNPHYDPELRALTGRDAPVRDFLEKSPEVARSFVSLRTFLQTWLAPFAQEHRNYVTVSLGCTGGQHRSVYMVEALARLLAGEGQRVLIQHRELGITETLT</sequence>
<reference key="1">
    <citation type="submission" date="2008-08" db="EMBL/GenBank/DDBJ databases">
        <title>Complete sequence of Acidithiobacillus ferrooxidans ATCC 53993.</title>
        <authorList>
            <person name="Lucas S."/>
            <person name="Copeland A."/>
            <person name="Lapidus A."/>
            <person name="Glavina del Rio T."/>
            <person name="Dalin E."/>
            <person name="Tice H."/>
            <person name="Bruce D."/>
            <person name="Goodwin L."/>
            <person name="Pitluck S."/>
            <person name="Sims D."/>
            <person name="Brettin T."/>
            <person name="Detter J.C."/>
            <person name="Han C."/>
            <person name="Kuske C.R."/>
            <person name="Larimer F."/>
            <person name="Land M."/>
            <person name="Hauser L."/>
            <person name="Kyrpides N."/>
            <person name="Lykidis A."/>
            <person name="Borole A.P."/>
        </authorList>
    </citation>
    <scope>NUCLEOTIDE SEQUENCE [LARGE SCALE GENOMIC DNA]</scope>
    <source>
        <strain>ATCC 53993 / BNL-5-31</strain>
    </source>
</reference>
<feature type="chain" id="PRO_0000383205" description="Nucleotide-binding protein Lferr_2629">
    <location>
        <begin position="1"/>
        <end position="299"/>
    </location>
</feature>
<feature type="binding site" evidence="1">
    <location>
        <begin position="11"/>
        <end position="18"/>
    </location>
    <ligand>
        <name>ATP</name>
        <dbReference type="ChEBI" id="CHEBI:30616"/>
    </ligand>
</feature>
<feature type="binding site" evidence="1">
    <location>
        <begin position="62"/>
        <end position="65"/>
    </location>
    <ligand>
        <name>GTP</name>
        <dbReference type="ChEBI" id="CHEBI:37565"/>
    </ligand>
</feature>